<dbReference type="EMBL" id="GU250733">
    <property type="protein sequence ID" value="ADB03187.1"/>
    <property type="molecule type" value="mRNA"/>
</dbReference>
<dbReference type="EMBL" id="AP005493">
    <property type="protein sequence ID" value="BAD03666.1"/>
    <property type="molecule type" value="Genomic_DNA"/>
</dbReference>
<dbReference type="EMBL" id="AP008214">
    <property type="protein sequence ID" value="BAF23457.1"/>
    <property type="status" value="ALT_SEQ"/>
    <property type="molecule type" value="Genomic_DNA"/>
</dbReference>
<dbReference type="EMBL" id="AP014964">
    <property type="status" value="NOT_ANNOTATED_CDS"/>
    <property type="molecule type" value="Genomic_DNA"/>
</dbReference>
<dbReference type="EMBL" id="CM000145">
    <property type="protein sequence ID" value="EAZ42309.1"/>
    <property type="molecule type" value="Genomic_DNA"/>
</dbReference>
<dbReference type="RefSeq" id="XP_015650142.1">
    <property type="nucleotide sequence ID" value="XM_015794656.1"/>
</dbReference>
<dbReference type="SMR" id="Q6Z0E2"/>
<dbReference type="FunCoup" id="Q6Z0E2">
    <property type="interactions" value="1928"/>
</dbReference>
<dbReference type="STRING" id="39947.Q6Z0E2"/>
<dbReference type="GlyCosmos" id="Q6Z0E2">
    <property type="glycosylation" value="3 sites, No reported glycans"/>
</dbReference>
<dbReference type="iPTMnet" id="Q6Z0E2"/>
<dbReference type="PaxDb" id="39947-Q6Z0E2"/>
<dbReference type="EnsemblPlants" id="Os08t0323700-01">
    <property type="protein sequence ID" value="Os08t0323700-01"/>
    <property type="gene ID" value="Os08g0323700"/>
</dbReference>
<dbReference type="Gramene" id="Os08t0323700-01">
    <property type="protein sequence ID" value="Os08t0323700-01"/>
    <property type="gene ID" value="Os08g0323700"/>
</dbReference>
<dbReference type="KEGG" id="dosa:Os08g0323700"/>
<dbReference type="eggNOG" id="KOG2082">
    <property type="taxonomic scope" value="Eukaryota"/>
</dbReference>
<dbReference type="InParanoid" id="Q6Z0E2"/>
<dbReference type="OrthoDB" id="2020542at2759"/>
<dbReference type="Proteomes" id="UP000000763">
    <property type="component" value="Chromosome 8"/>
</dbReference>
<dbReference type="Proteomes" id="UP000007752">
    <property type="component" value="Chromosome 8"/>
</dbReference>
<dbReference type="Proteomes" id="UP000059680">
    <property type="component" value="Chromosome 8"/>
</dbReference>
<dbReference type="ExpressionAtlas" id="Q6Z0E2">
    <property type="expression patterns" value="baseline and differential"/>
</dbReference>
<dbReference type="GO" id="GO:0016020">
    <property type="term" value="C:membrane"/>
    <property type="evidence" value="ECO:0007669"/>
    <property type="project" value="UniProtKB-SubCell"/>
</dbReference>
<dbReference type="GO" id="GO:0015379">
    <property type="term" value="F:potassium:chloride symporter activity"/>
    <property type="evidence" value="ECO:0000315"/>
    <property type="project" value="UniProtKB"/>
</dbReference>
<dbReference type="GO" id="GO:0055064">
    <property type="term" value="P:chloride ion homeostasis"/>
    <property type="evidence" value="ECO:0000315"/>
    <property type="project" value="UniProtKB"/>
</dbReference>
<dbReference type="GO" id="GO:0006821">
    <property type="term" value="P:chloride transport"/>
    <property type="evidence" value="ECO:0000315"/>
    <property type="project" value="UniProtKB"/>
</dbReference>
<dbReference type="GO" id="GO:0055075">
    <property type="term" value="P:potassium ion homeostasis"/>
    <property type="evidence" value="ECO:0000315"/>
    <property type="project" value="UniProtKB"/>
</dbReference>
<dbReference type="GO" id="GO:0071805">
    <property type="term" value="P:potassium ion transmembrane transport"/>
    <property type="evidence" value="ECO:0000315"/>
    <property type="project" value="UniProtKB"/>
</dbReference>
<dbReference type="FunFam" id="1.20.1740.10:FF:000021">
    <property type="entry name" value="Cation-chloride cotransporter 1"/>
    <property type="match status" value="1"/>
</dbReference>
<dbReference type="Gene3D" id="1.20.1740.10">
    <property type="entry name" value="Amino acid/polyamine transporter I"/>
    <property type="match status" value="1"/>
</dbReference>
<dbReference type="InterPro" id="IPR004841">
    <property type="entry name" value="AA-permease/SLC12A_dom"/>
</dbReference>
<dbReference type="InterPro" id="IPR018491">
    <property type="entry name" value="SLC12_C"/>
</dbReference>
<dbReference type="InterPro" id="IPR004842">
    <property type="entry name" value="SLC12A_fam"/>
</dbReference>
<dbReference type="NCBIfam" id="TIGR00930">
    <property type="entry name" value="2a30"/>
    <property type="match status" value="1"/>
</dbReference>
<dbReference type="PANTHER" id="PTHR11827:SF100">
    <property type="entry name" value="CATION-CHLORIDE COTRANSPORTER 1"/>
    <property type="match status" value="1"/>
</dbReference>
<dbReference type="PANTHER" id="PTHR11827">
    <property type="entry name" value="SOLUTE CARRIER FAMILY 12, CATION COTRANSPORTERS"/>
    <property type="match status" value="1"/>
</dbReference>
<dbReference type="Pfam" id="PF00324">
    <property type="entry name" value="AA_permease"/>
    <property type="match status" value="1"/>
</dbReference>
<dbReference type="Pfam" id="PF03522">
    <property type="entry name" value="SLC12"/>
    <property type="match status" value="2"/>
</dbReference>
<proteinExistence type="evidence at transcript level"/>
<keyword id="KW-0325">Glycoprotein</keyword>
<keyword id="KW-0406">Ion transport</keyword>
<keyword id="KW-0472">Membrane</keyword>
<keyword id="KW-0630">Potassium</keyword>
<keyword id="KW-0633">Potassium transport</keyword>
<keyword id="KW-1185">Reference proteome</keyword>
<keyword id="KW-0769">Symport</keyword>
<keyword id="KW-0812">Transmembrane</keyword>
<keyword id="KW-1133">Transmembrane helix</keyword>
<keyword id="KW-0813">Transport</keyword>
<reference key="1">
    <citation type="journal article" date="2011" name="Plant Mol. Biol.">
        <title>Cloning and functional characterization of a cation-chloride cotransporter gene OsCCC1.</title>
        <authorList>
            <person name="Kong X.Q."/>
            <person name="Gao X.H."/>
            <person name="Sun W."/>
            <person name="An J."/>
            <person name="Zhao Y.X."/>
            <person name="Zhang H."/>
        </authorList>
    </citation>
    <scope>NUCLEOTIDE SEQUENCE [MRNA]</scope>
    <scope>FUNCTION</scope>
    <scope>SUBCELLULAR LOCATION</scope>
    <scope>TISSUE SPECIFICITY</scope>
    <scope>INDUCTION</scope>
</reference>
<reference key="2">
    <citation type="journal article" date="2005" name="Nature">
        <title>The map-based sequence of the rice genome.</title>
        <authorList>
            <consortium name="International rice genome sequencing project (IRGSP)"/>
        </authorList>
    </citation>
    <scope>NUCLEOTIDE SEQUENCE [LARGE SCALE GENOMIC DNA]</scope>
    <source>
        <strain>cv. Nipponbare</strain>
    </source>
</reference>
<reference key="3">
    <citation type="journal article" date="2008" name="Nucleic Acids Res.">
        <title>The rice annotation project database (RAP-DB): 2008 update.</title>
        <authorList>
            <consortium name="The rice annotation project (RAP)"/>
        </authorList>
    </citation>
    <scope>GENOME REANNOTATION</scope>
    <source>
        <strain>cv. Nipponbare</strain>
    </source>
</reference>
<reference key="4">
    <citation type="journal article" date="2013" name="Rice">
        <title>Improvement of the Oryza sativa Nipponbare reference genome using next generation sequence and optical map data.</title>
        <authorList>
            <person name="Kawahara Y."/>
            <person name="de la Bastide M."/>
            <person name="Hamilton J.P."/>
            <person name="Kanamori H."/>
            <person name="McCombie W.R."/>
            <person name="Ouyang S."/>
            <person name="Schwartz D.C."/>
            <person name="Tanaka T."/>
            <person name="Wu J."/>
            <person name="Zhou S."/>
            <person name="Childs K.L."/>
            <person name="Davidson R.M."/>
            <person name="Lin H."/>
            <person name="Quesada-Ocampo L."/>
            <person name="Vaillancourt B."/>
            <person name="Sakai H."/>
            <person name="Lee S.S."/>
            <person name="Kim J."/>
            <person name="Numa H."/>
            <person name="Itoh T."/>
            <person name="Buell C.R."/>
            <person name="Matsumoto T."/>
        </authorList>
    </citation>
    <scope>GENOME REANNOTATION</scope>
    <source>
        <strain>cv. Nipponbare</strain>
    </source>
</reference>
<reference key="5">
    <citation type="journal article" date="2005" name="PLoS Biol.">
        <title>The genomes of Oryza sativa: a history of duplications.</title>
        <authorList>
            <person name="Yu J."/>
            <person name="Wang J."/>
            <person name="Lin W."/>
            <person name="Li S."/>
            <person name="Li H."/>
            <person name="Zhou J."/>
            <person name="Ni P."/>
            <person name="Dong W."/>
            <person name="Hu S."/>
            <person name="Zeng C."/>
            <person name="Zhang J."/>
            <person name="Zhang Y."/>
            <person name="Li R."/>
            <person name="Xu Z."/>
            <person name="Li S."/>
            <person name="Li X."/>
            <person name="Zheng H."/>
            <person name="Cong L."/>
            <person name="Lin L."/>
            <person name="Yin J."/>
            <person name="Geng J."/>
            <person name="Li G."/>
            <person name="Shi J."/>
            <person name="Liu J."/>
            <person name="Lv H."/>
            <person name="Li J."/>
            <person name="Wang J."/>
            <person name="Deng Y."/>
            <person name="Ran L."/>
            <person name="Shi X."/>
            <person name="Wang X."/>
            <person name="Wu Q."/>
            <person name="Li C."/>
            <person name="Ren X."/>
            <person name="Wang J."/>
            <person name="Wang X."/>
            <person name="Li D."/>
            <person name="Liu D."/>
            <person name="Zhang X."/>
            <person name="Ji Z."/>
            <person name="Zhao W."/>
            <person name="Sun Y."/>
            <person name="Zhang Z."/>
            <person name="Bao J."/>
            <person name="Han Y."/>
            <person name="Dong L."/>
            <person name="Ji J."/>
            <person name="Chen P."/>
            <person name="Wu S."/>
            <person name="Liu J."/>
            <person name="Xiao Y."/>
            <person name="Bu D."/>
            <person name="Tan J."/>
            <person name="Yang L."/>
            <person name="Ye C."/>
            <person name="Zhang J."/>
            <person name="Xu J."/>
            <person name="Zhou Y."/>
            <person name="Yu Y."/>
            <person name="Zhang B."/>
            <person name="Zhuang S."/>
            <person name="Wei H."/>
            <person name="Liu B."/>
            <person name="Lei M."/>
            <person name="Yu H."/>
            <person name="Li Y."/>
            <person name="Xu H."/>
            <person name="Wei S."/>
            <person name="He X."/>
            <person name="Fang L."/>
            <person name="Zhang Z."/>
            <person name="Zhang Y."/>
            <person name="Huang X."/>
            <person name="Su Z."/>
            <person name="Tong W."/>
            <person name="Li J."/>
            <person name="Tong Z."/>
            <person name="Li S."/>
            <person name="Ye J."/>
            <person name="Wang L."/>
            <person name="Fang L."/>
            <person name="Lei T."/>
            <person name="Chen C.-S."/>
            <person name="Chen H.-C."/>
            <person name="Xu Z."/>
            <person name="Li H."/>
            <person name="Huang H."/>
            <person name="Zhang F."/>
            <person name="Xu H."/>
            <person name="Li N."/>
            <person name="Zhao C."/>
            <person name="Li S."/>
            <person name="Dong L."/>
            <person name="Huang Y."/>
            <person name="Li L."/>
            <person name="Xi Y."/>
            <person name="Qi Q."/>
            <person name="Li W."/>
            <person name="Zhang B."/>
            <person name="Hu W."/>
            <person name="Zhang Y."/>
            <person name="Tian X."/>
            <person name="Jiao Y."/>
            <person name="Liang X."/>
            <person name="Jin J."/>
            <person name="Gao L."/>
            <person name="Zheng W."/>
            <person name="Hao B."/>
            <person name="Liu S.-M."/>
            <person name="Wang W."/>
            <person name="Yuan L."/>
            <person name="Cao M."/>
            <person name="McDermott J."/>
            <person name="Samudrala R."/>
            <person name="Wang J."/>
            <person name="Wong G.K.-S."/>
            <person name="Yang H."/>
        </authorList>
    </citation>
    <scope>NUCLEOTIDE SEQUENCE [LARGE SCALE GENOMIC DNA]</scope>
    <source>
        <strain>cv. Nipponbare</strain>
    </source>
</reference>
<protein>
    <recommendedName>
        <fullName>Cation-chloride cotransporter 1</fullName>
        <shortName>OsCCC1</shortName>
    </recommendedName>
    <alternativeName>
        <fullName>Potassium-chloride cotransporter 1</fullName>
    </alternativeName>
</protein>
<name>CCC1_ORYSJ</name>
<comment type="function">
    <text evidence="3">Probable cation/chloride cotransporter that may mediate potassium-chloride cotransport. Involved in plant development and K(+) and Cl(-) homeostasis. May not be involved in sodium-chloride cotransport.</text>
</comment>
<comment type="subcellular location">
    <subcellularLocation>
        <location evidence="3">Membrane</location>
        <topology evidence="3">Multi-pass membrane protein</topology>
    </subcellularLocation>
</comment>
<comment type="tissue specificity">
    <text evidence="3">Expressed in roots, stems and leaves with higher expression in root and leaf tips.</text>
</comment>
<comment type="induction">
    <text evidence="3">By KCl in roots and leaves.</text>
</comment>
<comment type="miscellaneous">
    <text>Plants silencing CCC1 have slightly shorter roots and leaves than wild-type, and are more sensitive to KCl treatment during seed germination and plant development.</text>
</comment>
<comment type="similarity">
    <text evidence="4">Belongs to the SLC12A transporter family.</text>
</comment>
<comment type="sequence caution" evidence="4">
    <conflict type="erroneous gene model prediction">
        <sequence resource="EMBL-CDS" id="BAF23457"/>
    </conflict>
</comment>
<sequence>MENGEIEGAADDGVPVPAPPNGRRYRPVGSSDRAVIQMTSMEPGSSSSTAVAAVSGITPQPPRNLTVDPSMQEDHTVSQGDSKLELFGFDSLVNILGLKSMTGEQIQAPSSPRDGEDVAITIGRPKETGPKFGTMMGVFVPCLQNILGIIYYIRFTWIVGMAGVWQSLVLVSFCGACTFLTGISLSAIATNGAMKGGGPYYLIGRALGPEVGVSIGLCFFLGNAVAGSMYVLGAVETFLDAVPSAGFFKESVTVVNNTLVNGTATASTATISTPSLHDLQVYGVIVTILLCFIVFGGVKIINKVAPAFLIPVLFSLLCIYLGVFIAPRHNAPKGITGLSITTFKDNWGSEYQRTNNAGVPDPNGSIYWDFNALVGLFFPAVTGIMAGSNRSASLKDTQRSIPIGTLSATLTTTAMYLFSVLLFGALATREELLTDRLLTATVAWPAPAVIYIGIILSTLGAALQSLTGAPRLLAAIANDDILPVLNYFKVSEGAEPHSATLFTAFICICCVVIGNLDLITPTITMFFLLCYAGVNLSCFLLDLLDAPSWRPRWKFHHWSLSLVGALLCVVIMFLISWSFTVVSLALASLIYYYVSLKGKAGDWGDGFKSAYFQLALRSLRSLGANQVHPKNWYPIPLIFCRPWGKLPENVPCHPKLADFANCMKKKGRGMSIFVSIIDGDYHELAEDAKTACRQLDTYIEYKRCEGVAEIIVAPSMSEGFRSIVQTMGLGNLKPNIIVMRYPEIWRRENLIQIPSTFVSIINDCIIANKAVVIVKGLDEWPNEYQRQYGTIDLYWIVRDGGLMLLLSQLLLTKETFESCKIQVFCIAEEDTDAEELKADVKKFLYDLRMHAEVIVVTMKSWEPHMESSSSGAPQDDSQEAYTSAQRRISTYLSEMKETAQREGHPLMEDGKQVVVNEQKIEKFLYTMFKLNSTILRYSRMAAVVLVSLPPPPLNHPAYFYMEYMDLLVENVPRMLIVRGYRRDVVTFFT</sequence>
<organism>
    <name type="scientific">Oryza sativa subsp. japonica</name>
    <name type="common">Rice</name>
    <dbReference type="NCBI Taxonomy" id="39947"/>
    <lineage>
        <taxon>Eukaryota</taxon>
        <taxon>Viridiplantae</taxon>
        <taxon>Streptophyta</taxon>
        <taxon>Embryophyta</taxon>
        <taxon>Tracheophyta</taxon>
        <taxon>Spermatophyta</taxon>
        <taxon>Magnoliopsida</taxon>
        <taxon>Liliopsida</taxon>
        <taxon>Poales</taxon>
        <taxon>Poaceae</taxon>
        <taxon>BOP clade</taxon>
        <taxon>Oryzoideae</taxon>
        <taxon>Oryzeae</taxon>
        <taxon>Oryzinae</taxon>
        <taxon>Oryza</taxon>
        <taxon>Oryza sativa</taxon>
    </lineage>
</organism>
<gene>
    <name type="primary">CCC1</name>
    <name type="synonym">KCC1</name>
    <name type="ordered locus">Os08g0323700</name>
    <name type="ordered locus">LOC_Os08g23440</name>
    <name type="ORF">OsJ_26882</name>
    <name type="ORF">OSJNBa0078D03.20</name>
</gene>
<evidence type="ECO:0000255" key="1"/>
<evidence type="ECO:0000256" key="2">
    <source>
        <dbReference type="SAM" id="MobiDB-lite"/>
    </source>
</evidence>
<evidence type="ECO:0000269" key="3">
    <source>
    </source>
</evidence>
<evidence type="ECO:0000305" key="4"/>
<feature type="chain" id="PRO_0000410467" description="Cation-chloride cotransporter 1">
    <location>
        <begin position="1"/>
        <end position="989"/>
    </location>
</feature>
<feature type="topological domain" description="Cytoplasmic" evidence="1">
    <location>
        <begin position="1"/>
        <end position="132"/>
    </location>
</feature>
<feature type="transmembrane region" description="Helical" evidence="1">
    <location>
        <begin position="133"/>
        <end position="153"/>
    </location>
</feature>
<feature type="topological domain" description="Extracellular" evidence="1">
    <location>
        <begin position="154"/>
        <end position="167"/>
    </location>
</feature>
<feature type="transmembrane region" description="Helical" evidence="1">
    <location>
        <begin position="168"/>
        <end position="188"/>
    </location>
</feature>
<feature type="topological domain" description="Cytoplasmic" evidence="1">
    <location>
        <begin position="189"/>
        <end position="214"/>
    </location>
</feature>
<feature type="transmembrane region" description="Helical" evidence="1">
    <location>
        <begin position="215"/>
        <end position="235"/>
    </location>
</feature>
<feature type="topological domain" description="Extracellular" evidence="1">
    <location>
        <begin position="236"/>
        <end position="280"/>
    </location>
</feature>
<feature type="transmembrane region" description="Helical" evidence="1">
    <location>
        <begin position="281"/>
        <end position="301"/>
    </location>
</feature>
<feature type="topological domain" description="Cytoplasmic" evidence="1">
    <location>
        <begin position="302"/>
        <end position="304"/>
    </location>
</feature>
<feature type="transmembrane region" description="Helical" evidence="1">
    <location>
        <begin position="305"/>
        <end position="325"/>
    </location>
</feature>
<feature type="topological domain" description="Extracellular" evidence="1">
    <location>
        <begin position="326"/>
        <end position="365"/>
    </location>
</feature>
<feature type="transmembrane region" description="Helical" evidence="1">
    <location>
        <begin position="366"/>
        <end position="386"/>
    </location>
</feature>
<feature type="topological domain" description="Cytoplasmic" evidence="1">
    <location>
        <begin position="387"/>
        <end position="405"/>
    </location>
</feature>
<feature type="transmembrane region" description="Helical" evidence="1">
    <location>
        <begin position="406"/>
        <end position="426"/>
    </location>
</feature>
<feature type="topological domain" description="Extracellular" evidence="1">
    <location>
        <begin position="427"/>
        <end position="441"/>
    </location>
</feature>
<feature type="transmembrane region" description="Helical" evidence="1">
    <location>
        <begin position="442"/>
        <end position="462"/>
    </location>
</feature>
<feature type="topological domain" description="Cytoplasmic" evidence="1">
    <location>
        <begin position="463"/>
        <end position="498"/>
    </location>
</feature>
<feature type="transmembrane region" description="Helical" evidence="1">
    <location>
        <begin position="499"/>
        <end position="519"/>
    </location>
</feature>
<feature type="topological domain" description="Extracellular" evidence="1">
    <location>
        <begin position="520"/>
        <end position="522"/>
    </location>
</feature>
<feature type="transmembrane region" description="Helical" evidence="1">
    <location>
        <begin position="523"/>
        <end position="543"/>
    </location>
</feature>
<feature type="topological domain" description="Cytoplasmic" evidence="1">
    <location>
        <begin position="544"/>
        <end position="551"/>
    </location>
</feature>
<feature type="transmembrane region" description="Helical" evidence="1">
    <location>
        <begin position="552"/>
        <end position="572"/>
    </location>
</feature>
<feature type="topological domain" description="Extracellular" evidence="1">
    <location>
        <begin position="573"/>
        <end position="578"/>
    </location>
</feature>
<feature type="transmembrane region" description="Helical" evidence="1">
    <location>
        <begin position="579"/>
        <end position="599"/>
    </location>
</feature>
<feature type="topological domain" description="Cytoplasmic" evidence="1">
    <location>
        <begin position="600"/>
        <end position="989"/>
    </location>
</feature>
<feature type="region of interest" description="Disordered" evidence="2">
    <location>
        <begin position="1"/>
        <end position="29"/>
    </location>
</feature>
<feature type="compositionally biased region" description="Acidic residues" evidence="2">
    <location>
        <begin position="1"/>
        <end position="10"/>
    </location>
</feature>
<feature type="glycosylation site" description="N-linked (GlcNAc...) asparagine" evidence="1">
    <location>
        <position position="256"/>
    </location>
</feature>
<feature type="glycosylation site" description="N-linked (GlcNAc...) asparagine" evidence="1">
    <location>
        <position position="261"/>
    </location>
</feature>
<feature type="glycosylation site" description="N-linked (GlcNAc...) asparagine" evidence="1">
    <location>
        <position position="363"/>
    </location>
</feature>
<accession>Q6Z0E2</accession>
<accession>Q0J6F8</accession>